<proteinExistence type="inferred from homology"/>
<name>COAD_METNO</name>
<protein>
    <recommendedName>
        <fullName evidence="1">Phosphopantetheine adenylyltransferase</fullName>
        <ecNumber evidence="1">2.7.7.3</ecNumber>
    </recommendedName>
    <alternativeName>
        <fullName evidence="1">Dephospho-CoA pyrophosphorylase</fullName>
    </alternativeName>
    <alternativeName>
        <fullName evidence="1">Pantetheine-phosphate adenylyltransferase</fullName>
        <shortName evidence="1">PPAT</shortName>
    </alternativeName>
</protein>
<accession>B8IK26</accession>
<keyword id="KW-0067">ATP-binding</keyword>
<keyword id="KW-0173">Coenzyme A biosynthesis</keyword>
<keyword id="KW-0963">Cytoplasm</keyword>
<keyword id="KW-0460">Magnesium</keyword>
<keyword id="KW-0547">Nucleotide-binding</keyword>
<keyword id="KW-0548">Nucleotidyltransferase</keyword>
<keyword id="KW-1185">Reference proteome</keyword>
<keyword id="KW-0808">Transferase</keyword>
<comment type="function">
    <text evidence="1">Reversibly transfers an adenylyl group from ATP to 4'-phosphopantetheine, yielding dephospho-CoA (dPCoA) and pyrophosphate.</text>
</comment>
<comment type="catalytic activity">
    <reaction evidence="1">
        <text>(R)-4'-phosphopantetheine + ATP + H(+) = 3'-dephospho-CoA + diphosphate</text>
        <dbReference type="Rhea" id="RHEA:19801"/>
        <dbReference type="ChEBI" id="CHEBI:15378"/>
        <dbReference type="ChEBI" id="CHEBI:30616"/>
        <dbReference type="ChEBI" id="CHEBI:33019"/>
        <dbReference type="ChEBI" id="CHEBI:57328"/>
        <dbReference type="ChEBI" id="CHEBI:61723"/>
        <dbReference type="EC" id="2.7.7.3"/>
    </reaction>
</comment>
<comment type="cofactor">
    <cofactor evidence="1">
        <name>Mg(2+)</name>
        <dbReference type="ChEBI" id="CHEBI:18420"/>
    </cofactor>
</comment>
<comment type="pathway">
    <text evidence="1">Cofactor biosynthesis; coenzyme A biosynthesis; CoA from (R)-pantothenate: step 4/5.</text>
</comment>
<comment type="subunit">
    <text evidence="1">Homohexamer.</text>
</comment>
<comment type="subcellular location">
    <subcellularLocation>
        <location evidence="1">Cytoplasm</location>
    </subcellularLocation>
</comment>
<comment type="similarity">
    <text evidence="1">Belongs to the bacterial CoaD family.</text>
</comment>
<reference key="1">
    <citation type="submission" date="2009-01" db="EMBL/GenBank/DDBJ databases">
        <title>Complete sequence of chromosome of Methylobacterium nodulans ORS 2060.</title>
        <authorList>
            <consortium name="US DOE Joint Genome Institute"/>
            <person name="Lucas S."/>
            <person name="Copeland A."/>
            <person name="Lapidus A."/>
            <person name="Glavina del Rio T."/>
            <person name="Dalin E."/>
            <person name="Tice H."/>
            <person name="Bruce D."/>
            <person name="Goodwin L."/>
            <person name="Pitluck S."/>
            <person name="Sims D."/>
            <person name="Brettin T."/>
            <person name="Detter J.C."/>
            <person name="Han C."/>
            <person name="Larimer F."/>
            <person name="Land M."/>
            <person name="Hauser L."/>
            <person name="Kyrpides N."/>
            <person name="Ivanova N."/>
            <person name="Marx C.J."/>
            <person name="Richardson P."/>
        </authorList>
    </citation>
    <scope>NUCLEOTIDE SEQUENCE [LARGE SCALE GENOMIC DNA]</scope>
    <source>
        <strain>LMG 21967 / CNCM I-2342 / ORS 2060</strain>
    </source>
</reference>
<dbReference type="EC" id="2.7.7.3" evidence="1"/>
<dbReference type="EMBL" id="CP001349">
    <property type="protein sequence ID" value="ACL60039.1"/>
    <property type="molecule type" value="Genomic_DNA"/>
</dbReference>
<dbReference type="RefSeq" id="WP_015931657.1">
    <property type="nucleotide sequence ID" value="NC_011894.1"/>
</dbReference>
<dbReference type="SMR" id="B8IK26"/>
<dbReference type="STRING" id="460265.Mnod_5193"/>
<dbReference type="KEGG" id="mno:Mnod_5193"/>
<dbReference type="eggNOG" id="COG0669">
    <property type="taxonomic scope" value="Bacteria"/>
</dbReference>
<dbReference type="HOGENOM" id="CLU_100149_0_1_5"/>
<dbReference type="OrthoDB" id="9806661at2"/>
<dbReference type="UniPathway" id="UPA00241">
    <property type="reaction ID" value="UER00355"/>
</dbReference>
<dbReference type="Proteomes" id="UP000008207">
    <property type="component" value="Chromosome"/>
</dbReference>
<dbReference type="GO" id="GO:0005737">
    <property type="term" value="C:cytoplasm"/>
    <property type="evidence" value="ECO:0007669"/>
    <property type="project" value="UniProtKB-SubCell"/>
</dbReference>
<dbReference type="GO" id="GO:0005524">
    <property type="term" value="F:ATP binding"/>
    <property type="evidence" value="ECO:0007669"/>
    <property type="project" value="UniProtKB-KW"/>
</dbReference>
<dbReference type="GO" id="GO:0004595">
    <property type="term" value="F:pantetheine-phosphate adenylyltransferase activity"/>
    <property type="evidence" value="ECO:0007669"/>
    <property type="project" value="UniProtKB-UniRule"/>
</dbReference>
<dbReference type="GO" id="GO:0015937">
    <property type="term" value="P:coenzyme A biosynthetic process"/>
    <property type="evidence" value="ECO:0007669"/>
    <property type="project" value="UniProtKB-UniRule"/>
</dbReference>
<dbReference type="CDD" id="cd02163">
    <property type="entry name" value="PPAT"/>
    <property type="match status" value="1"/>
</dbReference>
<dbReference type="Gene3D" id="3.40.50.620">
    <property type="entry name" value="HUPs"/>
    <property type="match status" value="1"/>
</dbReference>
<dbReference type="HAMAP" id="MF_00151">
    <property type="entry name" value="PPAT_bact"/>
    <property type="match status" value="1"/>
</dbReference>
<dbReference type="InterPro" id="IPR004821">
    <property type="entry name" value="Cyt_trans-like"/>
</dbReference>
<dbReference type="InterPro" id="IPR001980">
    <property type="entry name" value="PPAT"/>
</dbReference>
<dbReference type="InterPro" id="IPR014729">
    <property type="entry name" value="Rossmann-like_a/b/a_fold"/>
</dbReference>
<dbReference type="NCBIfam" id="TIGR01510">
    <property type="entry name" value="coaD_prev_kdtB"/>
    <property type="match status" value="1"/>
</dbReference>
<dbReference type="NCBIfam" id="TIGR00125">
    <property type="entry name" value="cyt_tran_rel"/>
    <property type="match status" value="1"/>
</dbReference>
<dbReference type="PANTHER" id="PTHR21342">
    <property type="entry name" value="PHOSPHOPANTETHEINE ADENYLYLTRANSFERASE"/>
    <property type="match status" value="1"/>
</dbReference>
<dbReference type="PANTHER" id="PTHR21342:SF1">
    <property type="entry name" value="PHOSPHOPANTETHEINE ADENYLYLTRANSFERASE"/>
    <property type="match status" value="1"/>
</dbReference>
<dbReference type="Pfam" id="PF01467">
    <property type="entry name" value="CTP_transf_like"/>
    <property type="match status" value="1"/>
</dbReference>
<dbReference type="PRINTS" id="PR01020">
    <property type="entry name" value="LPSBIOSNTHSS"/>
</dbReference>
<dbReference type="SUPFAM" id="SSF52374">
    <property type="entry name" value="Nucleotidylyl transferase"/>
    <property type="match status" value="1"/>
</dbReference>
<evidence type="ECO:0000255" key="1">
    <source>
        <dbReference type="HAMAP-Rule" id="MF_00151"/>
    </source>
</evidence>
<organism>
    <name type="scientific">Methylobacterium nodulans (strain LMG 21967 / CNCM I-2342 / ORS 2060)</name>
    <dbReference type="NCBI Taxonomy" id="460265"/>
    <lineage>
        <taxon>Bacteria</taxon>
        <taxon>Pseudomonadati</taxon>
        <taxon>Pseudomonadota</taxon>
        <taxon>Alphaproteobacteria</taxon>
        <taxon>Hyphomicrobiales</taxon>
        <taxon>Methylobacteriaceae</taxon>
        <taxon>Methylobacterium</taxon>
    </lineage>
</organism>
<sequence length="166" mass="17662">MNRTALYAGSFDPVTNGHVDVIRQACRLVGRLVIAIGVHPGKTPLFSAEERAELIRATCDPIAAAEGSALEVVTFDDLAVSAARRAGASLFIRGLRDGTDLDYEMQLAGMNSAMAPEVQTVFLPASTGVRPITATLVRQIAAMGGDVRPFVPELVAERLEARFAKP</sequence>
<feature type="chain" id="PRO_1000123291" description="Phosphopantetheine adenylyltransferase">
    <location>
        <begin position="1"/>
        <end position="166"/>
    </location>
</feature>
<feature type="binding site" evidence="1">
    <location>
        <begin position="10"/>
        <end position="11"/>
    </location>
    <ligand>
        <name>ATP</name>
        <dbReference type="ChEBI" id="CHEBI:30616"/>
    </ligand>
</feature>
<feature type="binding site" evidence="1">
    <location>
        <position position="10"/>
    </location>
    <ligand>
        <name>substrate</name>
    </ligand>
</feature>
<feature type="binding site" evidence="1">
    <location>
        <position position="18"/>
    </location>
    <ligand>
        <name>ATP</name>
        <dbReference type="ChEBI" id="CHEBI:30616"/>
    </ligand>
</feature>
<feature type="binding site" evidence="1">
    <location>
        <position position="42"/>
    </location>
    <ligand>
        <name>substrate</name>
    </ligand>
</feature>
<feature type="binding site" evidence="1">
    <location>
        <position position="79"/>
    </location>
    <ligand>
        <name>substrate</name>
    </ligand>
</feature>
<feature type="binding site" evidence="1">
    <location>
        <position position="93"/>
    </location>
    <ligand>
        <name>substrate</name>
    </ligand>
</feature>
<feature type="binding site" evidence="1">
    <location>
        <begin position="94"/>
        <end position="96"/>
    </location>
    <ligand>
        <name>ATP</name>
        <dbReference type="ChEBI" id="CHEBI:30616"/>
    </ligand>
</feature>
<feature type="binding site" evidence="1">
    <location>
        <position position="104"/>
    </location>
    <ligand>
        <name>ATP</name>
        <dbReference type="ChEBI" id="CHEBI:30616"/>
    </ligand>
</feature>
<feature type="binding site" evidence="1">
    <location>
        <begin position="129"/>
        <end position="135"/>
    </location>
    <ligand>
        <name>ATP</name>
        <dbReference type="ChEBI" id="CHEBI:30616"/>
    </ligand>
</feature>
<feature type="site" description="Transition state stabilizer" evidence="1">
    <location>
        <position position="18"/>
    </location>
</feature>
<gene>
    <name evidence="1" type="primary">coaD</name>
    <name type="ordered locus">Mnod_5193</name>
</gene>